<comment type="function">
    <text>May function as a testis specific transcription factor. Binds DNA in conjunction with GTF2A2 and TBP (the TATA-binding protein) and together with GTF2A2, allows mRNA transcription.</text>
</comment>
<comment type="subcellular location">
    <subcellularLocation>
        <location>Nucleus</location>
    </subcellularLocation>
</comment>
<comment type="tissue specificity">
    <text evidence="2 3">Testis specific. Expressed in pachytene spermatocytes and haploid spermatids.</text>
</comment>
<comment type="developmental stage">
    <text evidence="2">Expressed from 14 days postnatal day.</text>
</comment>
<comment type="similarity">
    <text evidence="4">Belongs to the TFIIA subunit 1 family.</text>
</comment>
<accession>Q8R4I4</accession>
<accession>Q99PM2</accession>
<accession>Q9DAF4</accession>
<organism>
    <name type="scientific">Mus musculus</name>
    <name type="common">Mouse</name>
    <dbReference type="NCBI Taxonomy" id="10090"/>
    <lineage>
        <taxon>Eukaryota</taxon>
        <taxon>Metazoa</taxon>
        <taxon>Chordata</taxon>
        <taxon>Craniata</taxon>
        <taxon>Vertebrata</taxon>
        <taxon>Euteleostomi</taxon>
        <taxon>Mammalia</taxon>
        <taxon>Eutheria</taxon>
        <taxon>Euarchontoglires</taxon>
        <taxon>Glires</taxon>
        <taxon>Rodentia</taxon>
        <taxon>Myomorpha</taxon>
        <taxon>Muroidea</taxon>
        <taxon>Muridae</taxon>
        <taxon>Murinae</taxon>
        <taxon>Mus</taxon>
        <taxon>Mus</taxon>
    </lineage>
</organism>
<keyword id="KW-0238">DNA-binding</keyword>
<keyword id="KW-0539">Nucleus</keyword>
<keyword id="KW-1185">Reference proteome</keyword>
<keyword id="KW-0804">Transcription</keyword>
<keyword id="KW-0805">Transcription regulation</keyword>
<feature type="chain" id="PRO_0000072496" description="TFIIA-alpha and beta-like factor">
    <location>
        <begin position="1"/>
        <end position="468"/>
    </location>
</feature>
<feature type="region of interest" description="Disordered" evidence="1">
    <location>
        <begin position="215"/>
        <end position="236"/>
    </location>
</feature>
<feature type="region of interest" description="Disordered" evidence="1">
    <location>
        <begin position="379"/>
        <end position="416"/>
    </location>
</feature>
<feature type="compositionally biased region" description="Polar residues" evidence="1">
    <location>
        <begin position="380"/>
        <end position="391"/>
    </location>
</feature>
<feature type="compositionally biased region" description="Acidic residues" evidence="1">
    <location>
        <begin position="401"/>
        <end position="416"/>
    </location>
</feature>
<feature type="sequence conflict" description="In Ref. 1; AAG50432." evidence="4" ref="1">
    <original>S</original>
    <variation>G</variation>
    <location>
        <position position="229"/>
    </location>
</feature>
<reference key="1">
    <citation type="journal article" date="2001" name="Biol. Reprod.">
        <title>TFIIAalpha/beta-like factor is encoded by a germ cell-specific gene whose expression is up-regulated with other general transcription factors during spermatogenesis in the mouse.</title>
        <authorList>
            <person name="Han S."/>
            <person name="Zhou L."/>
            <person name="Upadhyaya A.B."/>
            <person name="Lee S.H."/>
            <person name="Parker K.L."/>
            <person name="DeJong J."/>
        </authorList>
    </citation>
    <scope>NUCLEOTIDE SEQUENCE [MRNA]</scope>
    <scope>TISSUE SPECIFICITY</scope>
    <scope>DEVELOPMENTAL STAGE</scope>
    <source>
        <strain>CD-1</strain>
        <tissue>Testis</tissue>
    </source>
</reference>
<reference key="2">
    <citation type="journal article" date="2002" name="J. Biol. Chem.">
        <title>Regulation of ALF gene expression in somatic and male germ line tissues involves partial and site-specific patterns of methylation.</title>
        <authorList>
            <person name="Xie W."/>
            <person name="Han S."/>
            <person name="Khan M."/>
            <person name="DeJong J."/>
        </authorList>
    </citation>
    <scope>NUCLEOTIDE SEQUENCE [GENOMIC DNA]</scope>
    <scope>TISSUE SPECIFICITY</scope>
</reference>
<reference key="3">
    <citation type="journal article" date="2005" name="Science">
        <title>The transcriptional landscape of the mammalian genome.</title>
        <authorList>
            <person name="Carninci P."/>
            <person name="Kasukawa T."/>
            <person name="Katayama S."/>
            <person name="Gough J."/>
            <person name="Frith M.C."/>
            <person name="Maeda N."/>
            <person name="Oyama R."/>
            <person name="Ravasi T."/>
            <person name="Lenhard B."/>
            <person name="Wells C."/>
            <person name="Kodzius R."/>
            <person name="Shimokawa K."/>
            <person name="Bajic V.B."/>
            <person name="Brenner S.E."/>
            <person name="Batalov S."/>
            <person name="Forrest A.R."/>
            <person name="Zavolan M."/>
            <person name="Davis M.J."/>
            <person name="Wilming L.G."/>
            <person name="Aidinis V."/>
            <person name="Allen J.E."/>
            <person name="Ambesi-Impiombato A."/>
            <person name="Apweiler R."/>
            <person name="Aturaliya R.N."/>
            <person name="Bailey T.L."/>
            <person name="Bansal M."/>
            <person name="Baxter L."/>
            <person name="Beisel K.W."/>
            <person name="Bersano T."/>
            <person name="Bono H."/>
            <person name="Chalk A.M."/>
            <person name="Chiu K.P."/>
            <person name="Choudhary V."/>
            <person name="Christoffels A."/>
            <person name="Clutterbuck D.R."/>
            <person name="Crowe M.L."/>
            <person name="Dalla E."/>
            <person name="Dalrymple B.P."/>
            <person name="de Bono B."/>
            <person name="Della Gatta G."/>
            <person name="di Bernardo D."/>
            <person name="Down T."/>
            <person name="Engstrom P."/>
            <person name="Fagiolini M."/>
            <person name="Faulkner G."/>
            <person name="Fletcher C.F."/>
            <person name="Fukushima T."/>
            <person name="Furuno M."/>
            <person name="Futaki S."/>
            <person name="Gariboldi M."/>
            <person name="Georgii-Hemming P."/>
            <person name="Gingeras T.R."/>
            <person name="Gojobori T."/>
            <person name="Green R.E."/>
            <person name="Gustincich S."/>
            <person name="Harbers M."/>
            <person name="Hayashi Y."/>
            <person name="Hensch T.K."/>
            <person name="Hirokawa N."/>
            <person name="Hill D."/>
            <person name="Huminiecki L."/>
            <person name="Iacono M."/>
            <person name="Ikeo K."/>
            <person name="Iwama A."/>
            <person name="Ishikawa T."/>
            <person name="Jakt M."/>
            <person name="Kanapin A."/>
            <person name="Katoh M."/>
            <person name="Kawasawa Y."/>
            <person name="Kelso J."/>
            <person name="Kitamura H."/>
            <person name="Kitano H."/>
            <person name="Kollias G."/>
            <person name="Krishnan S.P."/>
            <person name="Kruger A."/>
            <person name="Kummerfeld S.K."/>
            <person name="Kurochkin I.V."/>
            <person name="Lareau L.F."/>
            <person name="Lazarevic D."/>
            <person name="Lipovich L."/>
            <person name="Liu J."/>
            <person name="Liuni S."/>
            <person name="McWilliam S."/>
            <person name="Madan Babu M."/>
            <person name="Madera M."/>
            <person name="Marchionni L."/>
            <person name="Matsuda H."/>
            <person name="Matsuzawa S."/>
            <person name="Miki H."/>
            <person name="Mignone F."/>
            <person name="Miyake S."/>
            <person name="Morris K."/>
            <person name="Mottagui-Tabar S."/>
            <person name="Mulder N."/>
            <person name="Nakano N."/>
            <person name="Nakauchi H."/>
            <person name="Ng P."/>
            <person name="Nilsson R."/>
            <person name="Nishiguchi S."/>
            <person name="Nishikawa S."/>
            <person name="Nori F."/>
            <person name="Ohara O."/>
            <person name="Okazaki Y."/>
            <person name="Orlando V."/>
            <person name="Pang K.C."/>
            <person name="Pavan W.J."/>
            <person name="Pavesi G."/>
            <person name="Pesole G."/>
            <person name="Petrovsky N."/>
            <person name="Piazza S."/>
            <person name="Reed J."/>
            <person name="Reid J.F."/>
            <person name="Ring B.Z."/>
            <person name="Ringwald M."/>
            <person name="Rost B."/>
            <person name="Ruan Y."/>
            <person name="Salzberg S.L."/>
            <person name="Sandelin A."/>
            <person name="Schneider C."/>
            <person name="Schoenbach C."/>
            <person name="Sekiguchi K."/>
            <person name="Semple C.A."/>
            <person name="Seno S."/>
            <person name="Sessa L."/>
            <person name="Sheng Y."/>
            <person name="Shibata Y."/>
            <person name="Shimada H."/>
            <person name="Shimada K."/>
            <person name="Silva D."/>
            <person name="Sinclair B."/>
            <person name="Sperling S."/>
            <person name="Stupka E."/>
            <person name="Sugiura K."/>
            <person name="Sultana R."/>
            <person name="Takenaka Y."/>
            <person name="Taki K."/>
            <person name="Tammoja K."/>
            <person name="Tan S.L."/>
            <person name="Tang S."/>
            <person name="Taylor M.S."/>
            <person name="Tegner J."/>
            <person name="Teichmann S.A."/>
            <person name="Ueda H.R."/>
            <person name="van Nimwegen E."/>
            <person name="Verardo R."/>
            <person name="Wei C.L."/>
            <person name="Yagi K."/>
            <person name="Yamanishi H."/>
            <person name="Zabarovsky E."/>
            <person name="Zhu S."/>
            <person name="Zimmer A."/>
            <person name="Hide W."/>
            <person name="Bult C."/>
            <person name="Grimmond S.M."/>
            <person name="Teasdale R.D."/>
            <person name="Liu E.T."/>
            <person name="Brusic V."/>
            <person name="Quackenbush J."/>
            <person name="Wahlestedt C."/>
            <person name="Mattick J.S."/>
            <person name="Hume D.A."/>
            <person name="Kai C."/>
            <person name="Sasaki D."/>
            <person name="Tomaru Y."/>
            <person name="Fukuda S."/>
            <person name="Kanamori-Katayama M."/>
            <person name="Suzuki M."/>
            <person name="Aoki J."/>
            <person name="Arakawa T."/>
            <person name="Iida J."/>
            <person name="Imamura K."/>
            <person name="Itoh M."/>
            <person name="Kato T."/>
            <person name="Kawaji H."/>
            <person name="Kawagashira N."/>
            <person name="Kawashima T."/>
            <person name="Kojima M."/>
            <person name="Kondo S."/>
            <person name="Konno H."/>
            <person name="Nakano K."/>
            <person name="Ninomiya N."/>
            <person name="Nishio T."/>
            <person name="Okada M."/>
            <person name="Plessy C."/>
            <person name="Shibata K."/>
            <person name="Shiraki T."/>
            <person name="Suzuki S."/>
            <person name="Tagami M."/>
            <person name="Waki K."/>
            <person name="Watahiki A."/>
            <person name="Okamura-Oho Y."/>
            <person name="Suzuki H."/>
            <person name="Kawai J."/>
            <person name="Hayashizaki Y."/>
        </authorList>
    </citation>
    <scope>NUCLEOTIDE SEQUENCE [LARGE SCALE MRNA]</scope>
    <source>
        <strain>C57BL/6J</strain>
        <tissue>Testis</tissue>
    </source>
</reference>
<reference key="4">
    <citation type="journal article" date="2004" name="Genome Res.">
        <title>The status, quality, and expansion of the NIH full-length cDNA project: the Mammalian Gene Collection (MGC).</title>
        <authorList>
            <consortium name="The MGC Project Team"/>
        </authorList>
    </citation>
    <scope>NUCLEOTIDE SEQUENCE [LARGE SCALE MRNA]</scope>
    <source>
        <tissue>Testis</tissue>
    </source>
</reference>
<reference key="5">
    <citation type="journal article" date="2010" name="Cell">
        <title>A tissue-specific atlas of mouse protein phosphorylation and expression.</title>
        <authorList>
            <person name="Huttlin E.L."/>
            <person name="Jedrychowski M.P."/>
            <person name="Elias J.E."/>
            <person name="Goswami T."/>
            <person name="Rad R."/>
            <person name="Beausoleil S.A."/>
            <person name="Villen J."/>
            <person name="Haas W."/>
            <person name="Sowa M.E."/>
            <person name="Gygi S.P."/>
        </authorList>
    </citation>
    <scope>IDENTIFICATION BY MASS SPECTROMETRY [LARGE SCALE ANALYSIS]</scope>
    <source>
        <tissue>Testis</tissue>
    </source>
</reference>
<proteinExistence type="evidence at protein level"/>
<sequence length="468" mass="51525">MAFINLVPKLYQSVIEDVIEGVRDLFAEEGIEEQVLKDLKKLWETKVLQSKATEDFFRNSTQVPLLTLQLPHALPPALQPEASLLIPAGRTLPSFTPEDLNTANCGANFAFAGYPIHVPAGMAFQTASGHLYKVNVPVMVTQTSGRTEILQHPFQQVLQQLGQPLVIQTTVPTLHPCSLQAATEKSLRMEAVLQPPPILHPPPVDRTHVENAASDRRLLPGNELRPQESSPYLSLPGVGFPPQAALTESSLEPVLGVSASLTQNLHSDPFSQGPPGPLHHHLLESQLQSLKDSIYGCDSTKQLRKAEEPSSLRVSEKNCTSERDLNIRVTDDDINEIIQIDGTGDNSSTEEMGSIRDADENEFPGIIDAGDLNVLEEVDSVSNEDSTANSSDNEDHQINAPEEDPLNSGDDVSEQDVPDLFDTENVIVCQYDKIHRSKNRWKFYLKDGVMCFGGRDYVFAKAIGEAEW</sequence>
<evidence type="ECO:0000256" key="1">
    <source>
        <dbReference type="SAM" id="MobiDB-lite"/>
    </source>
</evidence>
<evidence type="ECO:0000269" key="2">
    <source>
    </source>
</evidence>
<evidence type="ECO:0000269" key="3">
    <source>
    </source>
</evidence>
<evidence type="ECO:0000305" key="4"/>
<protein>
    <recommendedName>
        <fullName>TFIIA-alpha and beta-like factor</fullName>
    </recommendedName>
    <alternativeName>
        <fullName>General transcription factor II A, 1-like factor</fullName>
    </alternativeName>
</protein>
<gene>
    <name type="primary">Gtf2a1l</name>
    <name type="synonym">Alf</name>
    <name type="synonym">Gtf2a1lf</name>
</gene>
<name>TF2AY_MOUSE</name>
<dbReference type="EMBL" id="AF250835">
    <property type="protein sequence ID" value="AAG50432.1"/>
    <property type="molecule type" value="mRNA"/>
</dbReference>
<dbReference type="EMBL" id="AF452125">
    <property type="protein sequence ID" value="AAM12730.1"/>
    <property type="molecule type" value="Genomic_DNA"/>
</dbReference>
<dbReference type="EMBL" id="AK005881">
    <property type="protein sequence ID" value="BAB24296.1"/>
    <property type="molecule type" value="mRNA"/>
</dbReference>
<dbReference type="EMBL" id="BC050756">
    <property type="protein sequence ID" value="AAH50756.1"/>
    <property type="molecule type" value="mRNA"/>
</dbReference>
<dbReference type="CCDS" id="CCDS29024.1"/>
<dbReference type="RefSeq" id="NP_076119.2">
    <property type="nucleotide sequence ID" value="NM_023630.2"/>
</dbReference>
<dbReference type="BioGRID" id="214957">
    <property type="interactions" value="8"/>
</dbReference>
<dbReference type="FunCoup" id="Q8R4I4">
    <property type="interactions" value="61"/>
</dbReference>
<dbReference type="IntAct" id="Q8R4I4">
    <property type="interactions" value="8"/>
</dbReference>
<dbReference type="MINT" id="Q8R4I4"/>
<dbReference type="STRING" id="10090.ENSMUSP00000024970"/>
<dbReference type="PhosphoSitePlus" id="Q8R4I4"/>
<dbReference type="PaxDb" id="10090-ENSMUSP00000024970"/>
<dbReference type="ProteomicsDB" id="259010"/>
<dbReference type="Antibodypedia" id="35034">
    <property type="antibodies" value="271 antibodies from 18 providers"/>
</dbReference>
<dbReference type="DNASU" id="71828"/>
<dbReference type="Ensembl" id="ENSMUST00000024970.11">
    <property type="protein sequence ID" value="ENSMUSP00000024970.5"/>
    <property type="gene ID" value="ENSMUSG00000024154.12"/>
</dbReference>
<dbReference type="GeneID" id="71828"/>
<dbReference type="KEGG" id="mmu:71828"/>
<dbReference type="UCSC" id="uc008dvt.2">
    <property type="organism name" value="mouse"/>
</dbReference>
<dbReference type="AGR" id="MGI:1919078"/>
<dbReference type="CTD" id="11036"/>
<dbReference type="MGI" id="MGI:1919078">
    <property type="gene designation" value="Gtf2a1l"/>
</dbReference>
<dbReference type="VEuPathDB" id="HostDB:ENSMUSG00000024154"/>
<dbReference type="eggNOG" id="KOG2652">
    <property type="taxonomic scope" value="Eukaryota"/>
</dbReference>
<dbReference type="GeneTree" id="ENSGT00940000163055"/>
<dbReference type="HOGENOM" id="CLU_030027_3_1_1"/>
<dbReference type="InParanoid" id="Q8R4I4"/>
<dbReference type="OMA" id="EDYDEEC"/>
<dbReference type="OrthoDB" id="6275927at2759"/>
<dbReference type="PhylomeDB" id="Q8R4I4"/>
<dbReference type="TreeFam" id="TF350445"/>
<dbReference type="BioGRID-ORCS" id="71828">
    <property type="hits" value="2 hits in 77 CRISPR screens"/>
</dbReference>
<dbReference type="PRO" id="PR:Q8R4I4"/>
<dbReference type="Proteomes" id="UP000000589">
    <property type="component" value="Chromosome 17"/>
</dbReference>
<dbReference type="RNAct" id="Q8R4I4">
    <property type="molecule type" value="protein"/>
</dbReference>
<dbReference type="Bgee" id="ENSMUSG00000024154">
    <property type="expression patterns" value="Expressed in seminiferous tubule of testis and 19 other cell types or tissues"/>
</dbReference>
<dbReference type="ExpressionAtlas" id="Q8R4I4">
    <property type="expression patterns" value="baseline and differential"/>
</dbReference>
<dbReference type="GO" id="GO:0005737">
    <property type="term" value="C:cytoplasm"/>
    <property type="evidence" value="ECO:0000314"/>
    <property type="project" value="MGI"/>
</dbReference>
<dbReference type="GO" id="GO:0001673">
    <property type="term" value="C:male germ cell nucleus"/>
    <property type="evidence" value="ECO:0000314"/>
    <property type="project" value="MGI"/>
</dbReference>
<dbReference type="GO" id="GO:0005672">
    <property type="term" value="C:transcription factor TFIIA complex"/>
    <property type="evidence" value="ECO:0000314"/>
    <property type="project" value="MGI"/>
</dbReference>
<dbReference type="GO" id="GO:0003677">
    <property type="term" value="F:DNA binding"/>
    <property type="evidence" value="ECO:0007669"/>
    <property type="project" value="UniProtKB-KW"/>
</dbReference>
<dbReference type="GO" id="GO:0050890">
    <property type="term" value="P:cognition"/>
    <property type="evidence" value="ECO:0007669"/>
    <property type="project" value="Ensembl"/>
</dbReference>
<dbReference type="GO" id="GO:0006367">
    <property type="term" value="P:transcription initiation at RNA polymerase II promoter"/>
    <property type="evidence" value="ECO:0007669"/>
    <property type="project" value="InterPro"/>
</dbReference>
<dbReference type="CDD" id="cd07976">
    <property type="entry name" value="TFIIA_alpha_beta_like"/>
    <property type="match status" value="2"/>
</dbReference>
<dbReference type="FunFam" id="1.10.287.100:FF:000001">
    <property type="entry name" value="Transcription initiation factor IIA subunit"/>
    <property type="match status" value="1"/>
</dbReference>
<dbReference type="FunFam" id="2.30.18.10:FF:000002">
    <property type="entry name" value="Transcription initiation factor IIA subunit 1"/>
    <property type="match status" value="1"/>
</dbReference>
<dbReference type="Gene3D" id="1.10.287.100">
    <property type="match status" value="1"/>
</dbReference>
<dbReference type="Gene3D" id="2.30.18.10">
    <property type="entry name" value="Transcription factor IIA (TFIIA), beta-barrel domain"/>
    <property type="match status" value="1"/>
</dbReference>
<dbReference type="InterPro" id="IPR004855">
    <property type="entry name" value="TFIIA_asu/bsu"/>
</dbReference>
<dbReference type="InterPro" id="IPR009088">
    <property type="entry name" value="TFIIA_b-brl"/>
</dbReference>
<dbReference type="PANTHER" id="PTHR12694:SF9">
    <property type="entry name" value="TFIIA-ALPHA AND BETA-LIKE FACTOR"/>
    <property type="match status" value="1"/>
</dbReference>
<dbReference type="PANTHER" id="PTHR12694">
    <property type="entry name" value="TRANSCRIPTION INITIATION FACTOR IIA SUBUNIT 1"/>
    <property type="match status" value="1"/>
</dbReference>
<dbReference type="Pfam" id="PF03153">
    <property type="entry name" value="TFIIA"/>
    <property type="match status" value="1"/>
</dbReference>
<dbReference type="SMART" id="SM01371">
    <property type="entry name" value="TFIIA"/>
    <property type="match status" value="1"/>
</dbReference>
<dbReference type="SUPFAM" id="SSF47396">
    <property type="entry name" value="Transcription factor IIA (TFIIA), alpha-helical domain"/>
    <property type="match status" value="1"/>
</dbReference>
<dbReference type="SUPFAM" id="SSF50784">
    <property type="entry name" value="Transcription factor IIA (TFIIA), beta-barrel domain"/>
    <property type="match status" value="1"/>
</dbReference>